<sequence>MDFKKTIFWAAFSMSGLMLYNNWQVHEGKPSLFGGAPASAPAVADKATTNNKVDVPTQISGAPSVAATPIINGGAIESAEKFTLQNDVLVLEISASGANVIDAKLLKSLTAENKPVELFQYTPTHKYFARSGLVSLNNNDLPNHTSTFKLVQSGKDGSGRPFAVFASERNGVRLEKTFILNPGSYVVDVGHRVTQSTSNPNPLVLYTEIVRDASQEQKIGPFGGAFSANTFTGPVAYTDKEKFNKLEFSAIDKNKITIPTLVAAGEPAWIAMVQHYFASAWIPGDKVARDIYTGRIDNGLYRIGMQTPLGMVGPGSTVVEKAKLFVGPQEERVLETIAPGFELLKDYGYLTILAKPIFWLLDNIHFYVGNWGWSIILLTILIKLVFFPLSAASYKSMARMKEVQPRLVAMKEQYKGEPQKLNQAMMEMYRKEKINPLGGCLPVVIQIPVFISLYWVLLSSVETRGAPWILWIHDLSVPDPYYILPVIMAVSMFVQTKLNPTPPDPIQAKVMMYMPIVFSVMFFFFPAGLVLYWVVNNLLSIAQQWQINQMFGKKPAK</sequence>
<accession>B1XSN7</accession>
<name>YIDC_POLNS</name>
<comment type="function">
    <text evidence="1">Required for the insertion and/or proper folding and/or complex formation of integral membrane proteins into the membrane. Involved in integration of membrane proteins that insert both dependently and independently of the Sec translocase complex, as well as at least some lipoproteins. Aids folding of multispanning membrane proteins.</text>
</comment>
<comment type="subunit">
    <text evidence="1">Interacts with the Sec translocase complex via SecD. Specifically interacts with transmembrane segments of nascent integral membrane proteins during membrane integration.</text>
</comment>
<comment type="subcellular location">
    <subcellularLocation>
        <location evidence="1">Cell inner membrane</location>
        <topology evidence="1">Multi-pass membrane protein</topology>
    </subcellularLocation>
</comment>
<comment type="similarity">
    <text evidence="1">Belongs to the OXA1/ALB3/YidC family. Type 1 subfamily.</text>
</comment>
<reference key="1">
    <citation type="journal article" date="2013" name="Proc. Natl. Acad. Sci. U.S.A.">
        <title>Polynucleobacter necessarius, a model for genome reduction in both free-living and symbiotic bacteria.</title>
        <authorList>
            <person name="Boscaro V."/>
            <person name="Felletti M."/>
            <person name="Vannini C."/>
            <person name="Ackerman M.S."/>
            <person name="Chain P.S."/>
            <person name="Malfatti S."/>
            <person name="Vergez L.M."/>
            <person name="Shin M."/>
            <person name="Doak T.G."/>
            <person name="Lynch M."/>
            <person name="Petroni G."/>
        </authorList>
    </citation>
    <scope>NUCLEOTIDE SEQUENCE [LARGE SCALE GENOMIC DNA]</scope>
    <source>
        <strain>STIR1</strain>
    </source>
</reference>
<dbReference type="EMBL" id="CP001010">
    <property type="protein sequence ID" value="ACB44836.1"/>
    <property type="molecule type" value="Genomic_DNA"/>
</dbReference>
<dbReference type="SMR" id="B1XSN7"/>
<dbReference type="STRING" id="452638.Pnec_1784"/>
<dbReference type="KEGG" id="pne:Pnec_1784"/>
<dbReference type="eggNOG" id="COG0706">
    <property type="taxonomic scope" value="Bacteria"/>
</dbReference>
<dbReference type="HOGENOM" id="CLU_016535_3_0_4"/>
<dbReference type="OrthoDB" id="9780552at2"/>
<dbReference type="GO" id="GO:0005886">
    <property type="term" value="C:plasma membrane"/>
    <property type="evidence" value="ECO:0007669"/>
    <property type="project" value="UniProtKB-SubCell"/>
</dbReference>
<dbReference type="GO" id="GO:0032977">
    <property type="term" value="F:membrane insertase activity"/>
    <property type="evidence" value="ECO:0007669"/>
    <property type="project" value="InterPro"/>
</dbReference>
<dbReference type="GO" id="GO:0051205">
    <property type="term" value="P:protein insertion into membrane"/>
    <property type="evidence" value="ECO:0007669"/>
    <property type="project" value="TreeGrafter"/>
</dbReference>
<dbReference type="GO" id="GO:0015031">
    <property type="term" value="P:protein transport"/>
    <property type="evidence" value="ECO:0007669"/>
    <property type="project" value="UniProtKB-KW"/>
</dbReference>
<dbReference type="CDD" id="cd20070">
    <property type="entry name" value="5TM_YidC_Alb3"/>
    <property type="match status" value="1"/>
</dbReference>
<dbReference type="CDD" id="cd19961">
    <property type="entry name" value="EcYidC-like_peri"/>
    <property type="match status" value="1"/>
</dbReference>
<dbReference type="Gene3D" id="2.70.98.90">
    <property type="match status" value="1"/>
</dbReference>
<dbReference type="HAMAP" id="MF_01810">
    <property type="entry name" value="YidC_type1"/>
    <property type="match status" value="1"/>
</dbReference>
<dbReference type="InterPro" id="IPR019998">
    <property type="entry name" value="Membr_insert_YidC"/>
</dbReference>
<dbReference type="InterPro" id="IPR028053">
    <property type="entry name" value="Membr_insert_YidC_N"/>
</dbReference>
<dbReference type="InterPro" id="IPR001708">
    <property type="entry name" value="YidC/ALB3/OXA1/COX18"/>
</dbReference>
<dbReference type="InterPro" id="IPR028055">
    <property type="entry name" value="YidC/Oxa/ALB_C"/>
</dbReference>
<dbReference type="InterPro" id="IPR047196">
    <property type="entry name" value="YidC_ALB_C"/>
</dbReference>
<dbReference type="InterPro" id="IPR038221">
    <property type="entry name" value="YidC_periplasmic_sf"/>
</dbReference>
<dbReference type="NCBIfam" id="NF002352">
    <property type="entry name" value="PRK01318.1-3"/>
    <property type="match status" value="1"/>
</dbReference>
<dbReference type="NCBIfam" id="NF002353">
    <property type="entry name" value="PRK01318.1-4"/>
    <property type="match status" value="1"/>
</dbReference>
<dbReference type="NCBIfam" id="TIGR03593">
    <property type="entry name" value="yidC_nterm"/>
    <property type="match status" value="1"/>
</dbReference>
<dbReference type="NCBIfam" id="TIGR03592">
    <property type="entry name" value="yidC_oxa1_cterm"/>
    <property type="match status" value="1"/>
</dbReference>
<dbReference type="PANTHER" id="PTHR12428:SF65">
    <property type="entry name" value="CYTOCHROME C OXIDASE ASSEMBLY PROTEIN COX18, MITOCHONDRIAL"/>
    <property type="match status" value="1"/>
</dbReference>
<dbReference type="PANTHER" id="PTHR12428">
    <property type="entry name" value="OXA1"/>
    <property type="match status" value="1"/>
</dbReference>
<dbReference type="Pfam" id="PF02096">
    <property type="entry name" value="60KD_IMP"/>
    <property type="match status" value="1"/>
</dbReference>
<dbReference type="Pfam" id="PF14849">
    <property type="entry name" value="YidC_periplas"/>
    <property type="match status" value="1"/>
</dbReference>
<dbReference type="PRINTS" id="PR00701">
    <property type="entry name" value="60KDINNERMP"/>
</dbReference>
<dbReference type="PRINTS" id="PR01900">
    <property type="entry name" value="YIDCPROTEIN"/>
</dbReference>
<proteinExistence type="inferred from homology"/>
<feature type="chain" id="PRO_1000187687" description="Membrane protein insertase YidC">
    <location>
        <begin position="1"/>
        <end position="557"/>
    </location>
</feature>
<feature type="transmembrane region" description="Helical" evidence="1">
    <location>
        <begin position="371"/>
        <end position="391"/>
    </location>
</feature>
<feature type="transmembrane region" description="Helical" evidence="1">
    <location>
        <begin position="437"/>
        <end position="457"/>
    </location>
</feature>
<feature type="transmembrane region" description="Helical" evidence="1">
    <location>
        <begin position="515"/>
        <end position="535"/>
    </location>
</feature>
<evidence type="ECO:0000255" key="1">
    <source>
        <dbReference type="HAMAP-Rule" id="MF_01810"/>
    </source>
</evidence>
<protein>
    <recommendedName>
        <fullName evidence="1">Membrane protein insertase YidC</fullName>
    </recommendedName>
    <alternativeName>
        <fullName evidence="1">Foldase YidC</fullName>
    </alternativeName>
    <alternativeName>
        <fullName evidence="1">Membrane integrase YidC</fullName>
    </alternativeName>
    <alternativeName>
        <fullName evidence="1">Membrane protein YidC</fullName>
    </alternativeName>
</protein>
<gene>
    <name evidence="1" type="primary">yidC</name>
    <name type="ordered locus">Pnec_1784</name>
</gene>
<keyword id="KW-0997">Cell inner membrane</keyword>
<keyword id="KW-1003">Cell membrane</keyword>
<keyword id="KW-0143">Chaperone</keyword>
<keyword id="KW-0472">Membrane</keyword>
<keyword id="KW-0653">Protein transport</keyword>
<keyword id="KW-0812">Transmembrane</keyword>
<keyword id="KW-1133">Transmembrane helix</keyword>
<keyword id="KW-0813">Transport</keyword>
<organism>
    <name type="scientific">Polynucleobacter necessarius subsp. necessarius (strain STIR1)</name>
    <dbReference type="NCBI Taxonomy" id="452638"/>
    <lineage>
        <taxon>Bacteria</taxon>
        <taxon>Pseudomonadati</taxon>
        <taxon>Pseudomonadota</taxon>
        <taxon>Betaproteobacteria</taxon>
        <taxon>Burkholderiales</taxon>
        <taxon>Burkholderiaceae</taxon>
        <taxon>Polynucleobacter</taxon>
    </lineage>
</organism>